<feature type="chain" id="PRO_0000231783" description="Pyridoxine 5'-phosphate synthase">
    <location>
        <begin position="1"/>
        <end position="237"/>
    </location>
</feature>
<feature type="active site" description="Proton acceptor" evidence="1">
    <location>
        <position position="43"/>
    </location>
</feature>
<feature type="active site" description="Proton acceptor" evidence="1">
    <location>
        <position position="70"/>
    </location>
</feature>
<feature type="active site" description="Proton donor" evidence="1">
    <location>
        <position position="190"/>
    </location>
</feature>
<feature type="binding site" evidence="1">
    <location>
        <position position="7"/>
    </location>
    <ligand>
        <name>3-amino-2-oxopropyl phosphate</name>
        <dbReference type="ChEBI" id="CHEBI:57279"/>
    </ligand>
</feature>
<feature type="binding site" evidence="1">
    <location>
        <position position="18"/>
    </location>
    <ligand>
        <name>3-amino-2-oxopropyl phosphate</name>
        <dbReference type="ChEBI" id="CHEBI:57279"/>
    </ligand>
</feature>
<feature type="binding site" evidence="1">
    <location>
        <position position="45"/>
    </location>
    <ligand>
        <name>1-deoxy-D-xylulose 5-phosphate</name>
        <dbReference type="ChEBI" id="CHEBI:57792"/>
    </ligand>
</feature>
<feature type="binding site" evidence="1">
    <location>
        <position position="50"/>
    </location>
    <ligand>
        <name>1-deoxy-D-xylulose 5-phosphate</name>
        <dbReference type="ChEBI" id="CHEBI:57792"/>
    </ligand>
</feature>
<feature type="binding site" evidence="1">
    <location>
        <position position="100"/>
    </location>
    <ligand>
        <name>1-deoxy-D-xylulose 5-phosphate</name>
        <dbReference type="ChEBI" id="CHEBI:57792"/>
    </ligand>
</feature>
<feature type="binding site" evidence="1">
    <location>
        <position position="191"/>
    </location>
    <ligand>
        <name>3-amino-2-oxopropyl phosphate</name>
        <dbReference type="ChEBI" id="CHEBI:57279"/>
    </ligand>
</feature>
<feature type="binding site" evidence="1">
    <location>
        <begin position="213"/>
        <end position="214"/>
    </location>
    <ligand>
        <name>3-amino-2-oxopropyl phosphate</name>
        <dbReference type="ChEBI" id="CHEBI:57279"/>
    </ligand>
</feature>
<feature type="site" description="Transition state stabilizer" evidence="1">
    <location>
        <position position="151"/>
    </location>
</feature>
<sequence length="237" mass="26230">MTKLSVNINKVATLRNARGGDTPNVVKVALDCEAFGADGITVHPRPDERHIRRADVYDLRPLLRTEFNIEGYPSPEFIDLVLKVKPHQVTLVPDDPSQITSNSGWDTKANLEFLSEVLDQFNSAGIRTSVFVAADPEMVEYAAKAGADRVELYTEPYATAYPKNPEAAVAPFVEAAKTARKLGIGLNAGHDLSLVNLNYFYKNIPWVDEVSIGHALISDALYLGLERTIQEYKNCLR</sequence>
<proteinExistence type="inferred from homology"/>
<gene>
    <name evidence="1" type="primary">pdxJ</name>
    <name type="ordered locus">BT_3918</name>
</gene>
<dbReference type="EC" id="2.6.99.2" evidence="1"/>
<dbReference type="EMBL" id="AE015928">
    <property type="protein sequence ID" value="AAO79023.1"/>
    <property type="molecule type" value="Genomic_DNA"/>
</dbReference>
<dbReference type="RefSeq" id="NP_812829.1">
    <property type="nucleotide sequence ID" value="NC_004663.1"/>
</dbReference>
<dbReference type="RefSeq" id="WP_008760838.1">
    <property type="nucleotide sequence ID" value="NZ_UYXG01000011.1"/>
</dbReference>
<dbReference type="SMR" id="Q8A0V3"/>
<dbReference type="FunCoup" id="Q8A0V3">
    <property type="interactions" value="318"/>
</dbReference>
<dbReference type="STRING" id="226186.BT_3918"/>
<dbReference type="PaxDb" id="226186-BT_3918"/>
<dbReference type="EnsemblBacteria" id="AAO79023">
    <property type="protein sequence ID" value="AAO79023"/>
    <property type="gene ID" value="BT_3918"/>
</dbReference>
<dbReference type="KEGG" id="bth:BT_3918"/>
<dbReference type="PATRIC" id="fig|226186.12.peg.3982"/>
<dbReference type="eggNOG" id="COG0854">
    <property type="taxonomic scope" value="Bacteria"/>
</dbReference>
<dbReference type="HOGENOM" id="CLU_074563_1_0_10"/>
<dbReference type="InParanoid" id="Q8A0V3"/>
<dbReference type="OrthoDB" id="9806590at2"/>
<dbReference type="UniPathway" id="UPA00244">
    <property type="reaction ID" value="UER00313"/>
</dbReference>
<dbReference type="Proteomes" id="UP000001414">
    <property type="component" value="Chromosome"/>
</dbReference>
<dbReference type="GO" id="GO:0005829">
    <property type="term" value="C:cytosol"/>
    <property type="evidence" value="ECO:0000318"/>
    <property type="project" value="GO_Central"/>
</dbReference>
<dbReference type="GO" id="GO:0033856">
    <property type="term" value="F:pyridoxine 5'-phosphate synthase activity"/>
    <property type="evidence" value="ECO:0000318"/>
    <property type="project" value="GO_Central"/>
</dbReference>
<dbReference type="GO" id="GO:0008615">
    <property type="term" value="P:pyridoxine biosynthetic process"/>
    <property type="evidence" value="ECO:0000318"/>
    <property type="project" value="GO_Central"/>
</dbReference>
<dbReference type="CDD" id="cd00003">
    <property type="entry name" value="PNPsynthase"/>
    <property type="match status" value="1"/>
</dbReference>
<dbReference type="FunFam" id="3.20.20.70:FF:000150">
    <property type="entry name" value="Pyridoxine 5'-phosphate synthase"/>
    <property type="match status" value="1"/>
</dbReference>
<dbReference type="Gene3D" id="3.20.20.70">
    <property type="entry name" value="Aldolase class I"/>
    <property type="match status" value="1"/>
</dbReference>
<dbReference type="HAMAP" id="MF_00279">
    <property type="entry name" value="PdxJ"/>
    <property type="match status" value="1"/>
</dbReference>
<dbReference type="InterPro" id="IPR013785">
    <property type="entry name" value="Aldolase_TIM"/>
</dbReference>
<dbReference type="InterPro" id="IPR004569">
    <property type="entry name" value="PyrdxlP_synth_PdxJ"/>
</dbReference>
<dbReference type="InterPro" id="IPR036130">
    <property type="entry name" value="Pyridoxine-5'_phos_synth"/>
</dbReference>
<dbReference type="NCBIfam" id="TIGR00559">
    <property type="entry name" value="pdxJ"/>
    <property type="match status" value="1"/>
</dbReference>
<dbReference type="NCBIfam" id="NF003625">
    <property type="entry name" value="PRK05265.1-3"/>
    <property type="match status" value="1"/>
</dbReference>
<dbReference type="NCBIfam" id="NF003626">
    <property type="entry name" value="PRK05265.1-4"/>
    <property type="match status" value="1"/>
</dbReference>
<dbReference type="PANTHER" id="PTHR30456">
    <property type="entry name" value="PYRIDOXINE 5'-PHOSPHATE SYNTHASE"/>
    <property type="match status" value="1"/>
</dbReference>
<dbReference type="PANTHER" id="PTHR30456:SF0">
    <property type="entry name" value="PYRIDOXINE 5'-PHOSPHATE SYNTHASE"/>
    <property type="match status" value="1"/>
</dbReference>
<dbReference type="Pfam" id="PF03740">
    <property type="entry name" value="PdxJ"/>
    <property type="match status" value="1"/>
</dbReference>
<dbReference type="SUPFAM" id="SSF63892">
    <property type="entry name" value="Pyridoxine 5'-phosphate synthase"/>
    <property type="match status" value="1"/>
</dbReference>
<keyword id="KW-0963">Cytoplasm</keyword>
<keyword id="KW-0664">Pyridoxine biosynthesis</keyword>
<keyword id="KW-1185">Reference proteome</keyword>
<keyword id="KW-0808">Transferase</keyword>
<organism>
    <name type="scientific">Bacteroides thetaiotaomicron (strain ATCC 29148 / DSM 2079 / JCM 5827 / CCUG 10774 / NCTC 10582 / VPI-5482 / E50)</name>
    <dbReference type="NCBI Taxonomy" id="226186"/>
    <lineage>
        <taxon>Bacteria</taxon>
        <taxon>Pseudomonadati</taxon>
        <taxon>Bacteroidota</taxon>
        <taxon>Bacteroidia</taxon>
        <taxon>Bacteroidales</taxon>
        <taxon>Bacteroidaceae</taxon>
        <taxon>Bacteroides</taxon>
    </lineage>
</organism>
<reference key="1">
    <citation type="journal article" date="2003" name="Science">
        <title>A genomic view of the human-Bacteroides thetaiotaomicron symbiosis.</title>
        <authorList>
            <person name="Xu J."/>
            <person name="Bjursell M.K."/>
            <person name="Himrod J."/>
            <person name="Deng S."/>
            <person name="Carmichael L.K."/>
            <person name="Chiang H.C."/>
            <person name="Hooper L.V."/>
            <person name="Gordon J.I."/>
        </authorList>
    </citation>
    <scope>NUCLEOTIDE SEQUENCE [LARGE SCALE GENOMIC DNA]</scope>
    <source>
        <strain>ATCC 29148 / DSM 2079 / JCM 5827 / CCUG 10774 / NCTC 10582 / VPI-5482 / E50</strain>
    </source>
</reference>
<accession>Q8A0V3</accession>
<evidence type="ECO:0000255" key="1">
    <source>
        <dbReference type="HAMAP-Rule" id="MF_00279"/>
    </source>
</evidence>
<protein>
    <recommendedName>
        <fullName evidence="1">Pyridoxine 5'-phosphate synthase</fullName>
        <shortName evidence="1">PNP synthase</shortName>
        <ecNumber evidence="1">2.6.99.2</ecNumber>
    </recommendedName>
</protein>
<comment type="function">
    <text evidence="1">Catalyzes the complicated ring closure reaction between the two acyclic compounds 1-deoxy-D-xylulose-5-phosphate (DXP) and 3-amino-2-oxopropyl phosphate (1-amino-acetone-3-phosphate or AAP) to form pyridoxine 5'-phosphate (PNP) and inorganic phosphate.</text>
</comment>
<comment type="catalytic activity">
    <reaction evidence="1">
        <text>3-amino-2-oxopropyl phosphate + 1-deoxy-D-xylulose 5-phosphate = pyridoxine 5'-phosphate + phosphate + 2 H2O + H(+)</text>
        <dbReference type="Rhea" id="RHEA:15265"/>
        <dbReference type="ChEBI" id="CHEBI:15377"/>
        <dbReference type="ChEBI" id="CHEBI:15378"/>
        <dbReference type="ChEBI" id="CHEBI:43474"/>
        <dbReference type="ChEBI" id="CHEBI:57279"/>
        <dbReference type="ChEBI" id="CHEBI:57792"/>
        <dbReference type="ChEBI" id="CHEBI:58589"/>
        <dbReference type="EC" id="2.6.99.2"/>
    </reaction>
</comment>
<comment type="pathway">
    <text evidence="1">Cofactor biosynthesis; pyridoxine 5'-phosphate biosynthesis; pyridoxine 5'-phosphate from D-erythrose 4-phosphate: step 5/5.</text>
</comment>
<comment type="subunit">
    <text evidence="1">Homooctamer; tetramer of dimers.</text>
</comment>
<comment type="subcellular location">
    <subcellularLocation>
        <location evidence="1">Cytoplasm</location>
    </subcellularLocation>
</comment>
<comment type="similarity">
    <text evidence="1">Belongs to the PNP synthase family.</text>
</comment>
<name>PDXJ_BACTN</name>